<gene>
    <name type="ordered locus">Mboo_1274</name>
</gene>
<comment type="similarity">
    <text evidence="1">Belongs to the UPF0280 family.</text>
</comment>
<dbReference type="EMBL" id="CP000780">
    <property type="protein sequence ID" value="ABS55792.1"/>
    <property type="molecule type" value="Genomic_DNA"/>
</dbReference>
<dbReference type="RefSeq" id="WP_012106824.1">
    <property type="nucleotide sequence ID" value="NC_009712.1"/>
</dbReference>
<dbReference type="SMR" id="A7I7T1"/>
<dbReference type="STRING" id="456442.Mboo_1274"/>
<dbReference type="GeneID" id="5410294"/>
<dbReference type="KEGG" id="mbn:Mboo_1274"/>
<dbReference type="eggNOG" id="arCOG04376">
    <property type="taxonomic scope" value="Archaea"/>
</dbReference>
<dbReference type="HOGENOM" id="CLU_074757_0_0_2"/>
<dbReference type="OrthoDB" id="50299at2157"/>
<dbReference type="Proteomes" id="UP000002408">
    <property type="component" value="Chromosome"/>
</dbReference>
<dbReference type="Gene3D" id="3.10.520.10">
    <property type="entry name" value="ApbE-like domains"/>
    <property type="match status" value="1"/>
</dbReference>
<dbReference type="HAMAP" id="MF_01079">
    <property type="entry name" value="UPF0280"/>
    <property type="match status" value="1"/>
</dbReference>
<dbReference type="InterPro" id="IPR003374">
    <property type="entry name" value="ApbE-like_sf"/>
</dbReference>
<dbReference type="InterPro" id="IPR037456">
    <property type="entry name" value="MA1715-like"/>
</dbReference>
<dbReference type="InterPro" id="IPR007183">
    <property type="entry name" value="UPF0280"/>
</dbReference>
<dbReference type="NCBIfam" id="NF003324">
    <property type="entry name" value="PRK04334.1-4"/>
    <property type="match status" value="1"/>
</dbReference>
<dbReference type="PIRSF" id="PIRSF006421">
    <property type="entry name" value="UCP006421"/>
    <property type="match status" value="1"/>
</dbReference>
<dbReference type="SUPFAM" id="SSF143631">
    <property type="entry name" value="ApbE-like"/>
    <property type="match status" value="1"/>
</dbReference>
<reference key="1">
    <citation type="journal article" date="2015" name="Microbiology">
        <title>Genome of Methanoregula boonei 6A8 reveals adaptations to oligotrophic peatland environments.</title>
        <authorList>
            <person name="Braeuer S."/>
            <person name="Cadillo-Quiroz H."/>
            <person name="Kyrpides N."/>
            <person name="Woyke T."/>
            <person name="Goodwin L."/>
            <person name="Detter C."/>
            <person name="Podell S."/>
            <person name="Yavitt J.B."/>
            <person name="Zinder S.H."/>
        </authorList>
    </citation>
    <scope>NUCLEOTIDE SEQUENCE [LARGE SCALE GENOMIC DNA]</scope>
    <source>
        <strain>DSM 21154 / JCM 14090 / 6A8</strain>
    </source>
</reference>
<evidence type="ECO:0000255" key="1">
    <source>
        <dbReference type="HAMAP-Rule" id="MF_01079"/>
    </source>
</evidence>
<sequence length="238" mass="25157">MIREPFRYRETFAAILADTPAHADAAKRGMIAARQVLECYIARDPFFASTFFPYEPETDETLICHMANAAAHAGVGPMATVAGAIAAAGINAMMDAGATFGVIDNGGDIALVSDRDVRVGVHAGSAPVSDRIAFIVPPQEQHSYGICTSSATVGPSISFGMADAVTIFARDPLDADAWATAVCNRIRPDDHRVLETIDPSRVDGVYAIMGESVVSWGKVPPVVPARVDEQLIAAGDRL</sequence>
<accession>A7I7T1</accession>
<organism>
    <name type="scientific">Methanoregula boonei (strain DSM 21154 / JCM 14090 / 6A8)</name>
    <dbReference type="NCBI Taxonomy" id="456442"/>
    <lineage>
        <taxon>Archaea</taxon>
        <taxon>Methanobacteriati</taxon>
        <taxon>Methanobacteriota</taxon>
        <taxon>Stenosarchaea group</taxon>
        <taxon>Methanomicrobia</taxon>
        <taxon>Methanomicrobiales</taxon>
        <taxon>Methanoregulaceae</taxon>
        <taxon>Methanoregula</taxon>
    </lineage>
</organism>
<proteinExistence type="inferred from homology"/>
<name>Y1274_METB6</name>
<keyword id="KW-1185">Reference proteome</keyword>
<protein>
    <recommendedName>
        <fullName evidence="1">UPF0280 protein Mboo_1274</fullName>
    </recommendedName>
</protein>
<feature type="chain" id="PRO_0000366709" description="UPF0280 protein Mboo_1274">
    <location>
        <begin position="1"/>
        <end position="238"/>
    </location>
</feature>